<protein>
    <recommendedName>
        <fullName evidence="1">Small ribosomal subunit protein uS5</fullName>
    </recommendedName>
    <alternativeName>
        <fullName evidence="2">30S ribosomal protein S5</fullName>
    </alternativeName>
</protein>
<organism>
    <name type="scientific">Staphylococcus aureus (strain Mu3 / ATCC 700698)</name>
    <dbReference type="NCBI Taxonomy" id="418127"/>
    <lineage>
        <taxon>Bacteria</taxon>
        <taxon>Bacillati</taxon>
        <taxon>Bacillota</taxon>
        <taxon>Bacilli</taxon>
        <taxon>Bacillales</taxon>
        <taxon>Staphylococcaceae</taxon>
        <taxon>Staphylococcus</taxon>
    </lineage>
</organism>
<proteinExistence type="inferred from homology"/>
<reference key="1">
    <citation type="journal article" date="2008" name="Antimicrob. Agents Chemother.">
        <title>Mutated response regulator graR is responsible for phenotypic conversion of Staphylococcus aureus from heterogeneous vancomycin-intermediate resistance to vancomycin-intermediate resistance.</title>
        <authorList>
            <person name="Neoh H.-M."/>
            <person name="Cui L."/>
            <person name="Yuzawa H."/>
            <person name="Takeuchi F."/>
            <person name="Matsuo M."/>
            <person name="Hiramatsu K."/>
        </authorList>
    </citation>
    <scope>NUCLEOTIDE SEQUENCE [LARGE SCALE GENOMIC DNA]</scope>
    <source>
        <strain>Mu3 / ATCC 700698</strain>
    </source>
</reference>
<gene>
    <name evidence="1" type="primary">rpsE</name>
    <name type="ordered locus">SAHV_2217</name>
</gene>
<feature type="chain" id="PRO_1000086060" description="Small ribosomal subunit protein uS5">
    <location>
        <begin position="1"/>
        <end position="166"/>
    </location>
</feature>
<feature type="domain" description="S5 DRBM" evidence="1">
    <location>
        <begin position="11"/>
        <end position="74"/>
    </location>
</feature>
<sequence length="166" mass="17742">MARREEETKEFEERVVTINRVAKVVKGGRRFRFTALVVVGDKNGRVGFGTGKAQEVPEAIKKAVEAAKKDLVVVPRVEGTTPHTITGRYGSGSVFMKPAAPGTGVIAGGPVRAVLELAGITDILSKSLGSNTPINMVRATIDGLQNLKNAEDVAKLRGKTVEELYN</sequence>
<evidence type="ECO:0000255" key="1">
    <source>
        <dbReference type="HAMAP-Rule" id="MF_01307"/>
    </source>
</evidence>
<evidence type="ECO:0000305" key="2"/>
<comment type="function">
    <text evidence="1">With S4 and S12 plays an important role in translational accuracy.</text>
</comment>
<comment type="function">
    <text evidence="1">Located at the back of the 30S subunit body where it stabilizes the conformation of the head with respect to the body.</text>
</comment>
<comment type="subunit">
    <text evidence="1">Part of the 30S ribosomal subunit. Contacts proteins S4 and S8.</text>
</comment>
<comment type="domain">
    <text>The N-terminal domain interacts with the head of the 30S subunit; the C-terminal domain interacts with the body and contacts protein S4. The interaction surface between S4 and S5 is involved in control of translational fidelity.</text>
</comment>
<comment type="similarity">
    <text evidence="1">Belongs to the universal ribosomal protein uS5 family.</text>
</comment>
<dbReference type="EMBL" id="AP009324">
    <property type="protein sequence ID" value="BAF79100.1"/>
    <property type="molecule type" value="Genomic_DNA"/>
</dbReference>
<dbReference type="RefSeq" id="WP_000113851.1">
    <property type="nucleotide sequence ID" value="NZ_CTYB01000025.1"/>
</dbReference>
<dbReference type="SMR" id="A7X5D8"/>
<dbReference type="KEGG" id="saw:SAHV_2217"/>
<dbReference type="HOGENOM" id="CLU_065898_2_2_9"/>
<dbReference type="GO" id="GO:0015935">
    <property type="term" value="C:small ribosomal subunit"/>
    <property type="evidence" value="ECO:0007669"/>
    <property type="project" value="InterPro"/>
</dbReference>
<dbReference type="GO" id="GO:0019843">
    <property type="term" value="F:rRNA binding"/>
    <property type="evidence" value="ECO:0007669"/>
    <property type="project" value="UniProtKB-UniRule"/>
</dbReference>
<dbReference type="GO" id="GO:0003735">
    <property type="term" value="F:structural constituent of ribosome"/>
    <property type="evidence" value="ECO:0007669"/>
    <property type="project" value="InterPro"/>
</dbReference>
<dbReference type="GO" id="GO:0006412">
    <property type="term" value="P:translation"/>
    <property type="evidence" value="ECO:0007669"/>
    <property type="project" value="UniProtKB-UniRule"/>
</dbReference>
<dbReference type="FunFam" id="3.30.160.20:FF:000001">
    <property type="entry name" value="30S ribosomal protein S5"/>
    <property type="match status" value="1"/>
</dbReference>
<dbReference type="FunFam" id="3.30.230.10:FF:000002">
    <property type="entry name" value="30S ribosomal protein S5"/>
    <property type="match status" value="1"/>
</dbReference>
<dbReference type="Gene3D" id="3.30.160.20">
    <property type="match status" value="1"/>
</dbReference>
<dbReference type="Gene3D" id="3.30.230.10">
    <property type="match status" value="1"/>
</dbReference>
<dbReference type="HAMAP" id="MF_01307_B">
    <property type="entry name" value="Ribosomal_uS5_B"/>
    <property type="match status" value="1"/>
</dbReference>
<dbReference type="InterPro" id="IPR020568">
    <property type="entry name" value="Ribosomal_Su5_D2-typ_SF"/>
</dbReference>
<dbReference type="InterPro" id="IPR000851">
    <property type="entry name" value="Ribosomal_uS5"/>
</dbReference>
<dbReference type="InterPro" id="IPR005712">
    <property type="entry name" value="Ribosomal_uS5_bac-type"/>
</dbReference>
<dbReference type="InterPro" id="IPR005324">
    <property type="entry name" value="Ribosomal_uS5_C"/>
</dbReference>
<dbReference type="InterPro" id="IPR013810">
    <property type="entry name" value="Ribosomal_uS5_N"/>
</dbReference>
<dbReference type="InterPro" id="IPR018192">
    <property type="entry name" value="Ribosomal_uS5_N_CS"/>
</dbReference>
<dbReference type="InterPro" id="IPR014721">
    <property type="entry name" value="Ribsml_uS5_D2-typ_fold_subgr"/>
</dbReference>
<dbReference type="NCBIfam" id="TIGR01021">
    <property type="entry name" value="rpsE_bact"/>
    <property type="match status" value="1"/>
</dbReference>
<dbReference type="PANTHER" id="PTHR48277">
    <property type="entry name" value="MITOCHONDRIAL RIBOSOMAL PROTEIN S5"/>
    <property type="match status" value="1"/>
</dbReference>
<dbReference type="PANTHER" id="PTHR48277:SF1">
    <property type="entry name" value="MITOCHONDRIAL RIBOSOMAL PROTEIN S5"/>
    <property type="match status" value="1"/>
</dbReference>
<dbReference type="Pfam" id="PF00333">
    <property type="entry name" value="Ribosomal_S5"/>
    <property type="match status" value="1"/>
</dbReference>
<dbReference type="Pfam" id="PF03719">
    <property type="entry name" value="Ribosomal_S5_C"/>
    <property type="match status" value="1"/>
</dbReference>
<dbReference type="SUPFAM" id="SSF54768">
    <property type="entry name" value="dsRNA-binding domain-like"/>
    <property type="match status" value="1"/>
</dbReference>
<dbReference type="SUPFAM" id="SSF54211">
    <property type="entry name" value="Ribosomal protein S5 domain 2-like"/>
    <property type="match status" value="1"/>
</dbReference>
<dbReference type="PROSITE" id="PS00585">
    <property type="entry name" value="RIBOSOMAL_S5"/>
    <property type="match status" value="1"/>
</dbReference>
<dbReference type="PROSITE" id="PS50881">
    <property type="entry name" value="S5_DSRBD"/>
    <property type="match status" value="1"/>
</dbReference>
<name>RS5_STAA1</name>
<keyword id="KW-0687">Ribonucleoprotein</keyword>
<keyword id="KW-0689">Ribosomal protein</keyword>
<keyword id="KW-0694">RNA-binding</keyword>
<keyword id="KW-0699">rRNA-binding</keyword>
<accession>A7X5D8</accession>